<accession>Q99S48</accession>
<protein>
    <recommendedName>
        <fullName evidence="1">Energy-coupling factor transporter ATP-binding protein EcfA2</fullName>
        <shortName evidence="1">ECF transporter A component EcfA2</shortName>
        <ecNumber evidence="1">7.-.-.-</ecNumber>
    </recommendedName>
</protein>
<keyword id="KW-0067">ATP-binding</keyword>
<keyword id="KW-1003">Cell membrane</keyword>
<keyword id="KW-0472">Membrane</keyword>
<keyword id="KW-0547">Nucleotide-binding</keyword>
<keyword id="KW-1278">Translocase</keyword>
<keyword id="KW-0813">Transport</keyword>
<evidence type="ECO:0000255" key="1">
    <source>
        <dbReference type="HAMAP-Rule" id="MF_01710"/>
    </source>
</evidence>
<gene>
    <name evidence="1" type="primary">ecfA2</name>
    <name type="synonym">cbiO2</name>
    <name type="ordered locus">SAV2221</name>
</gene>
<sequence length="286" mass="32919">MTIRFDNVSYTYQKGTPYQHQAIHDVNTEFEQGKYYAIVGQTGSGKSTLIQNINALLKPTTGTVTVDDITITHKTKDKYIRPVRKRIGMVFQFPESQLFEDTVEREMIFGPKNFKMNLDEAKNYAHRLLMDLGFSRDVMSQSPFQMSGGQMRKIAIVSILAMNPDIIVVDEPTAGLDPQSKRQVMRLLKSLQTDENKAIILISHDMNEVARYADEVIVMKEGSIVSQTSPKELFKDKKKLADWHIGLPEIVQLQYDFEQKYQTKLKDIALTEEAFVSLYKEWQHEK</sequence>
<organism>
    <name type="scientific">Staphylococcus aureus (strain Mu50 / ATCC 700699)</name>
    <dbReference type="NCBI Taxonomy" id="158878"/>
    <lineage>
        <taxon>Bacteria</taxon>
        <taxon>Bacillati</taxon>
        <taxon>Bacillota</taxon>
        <taxon>Bacilli</taxon>
        <taxon>Bacillales</taxon>
        <taxon>Staphylococcaceae</taxon>
        <taxon>Staphylococcus</taxon>
    </lineage>
</organism>
<comment type="function">
    <text evidence="1">ATP-binding (A) component of a common energy-coupling factor (ECF) ABC-transporter complex. Unlike classic ABC transporters this ECF transporter provides the energy necessary to transport a number of different substrates.</text>
</comment>
<comment type="subunit">
    <text evidence="1">Forms a stable energy-coupling factor (ECF) transporter complex composed of 2 membrane-embedded substrate-binding proteins (S component), 2 ATP-binding proteins (A component) and 2 transmembrane proteins (T component).</text>
</comment>
<comment type="subcellular location">
    <subcellularLocation>
        <location evidence="1">Cell membrane</location>
        <topology evidence="1">Peripheral membrane protein</topology>
    </subcellularLocation>
</comment>
<comment type="similarity">
    <text evidence="1">Belongs to the ABC transporter superfamily. Energy-coupling factor EcfA family.</text>
</comment>
<feature type="chain" id="PRO_0000092065" description="Energy-coupling factor transporter ATP-binding protein EcfA2">
    <location>
        <begin position="1"/>
        <end position="286"/>
    </location>
</feature>
<feature type="domain" description="ABC transporter" evidence="1">
    <location>
        <begin position="3"/>
        <end position="246"/>
    </location>
</feature>
<feature type="binding site" evidence="1">
    <location>
        <begin position="40"/>
        <end position="47"/>
    </location>
    <ligand>
        <name>ATP</name>
        <dbReference type="ChEBI" id="CHEBI:30616"/>
    </ligand>
</feature>
<name>ECFA2_STAAM</name>
<proteinExistence type="inferred from homology"/>
<dbReference type="EC" id="7.-.-.-" evidence="1"/>
<dbReference type="EMBL" id="BA000017">
    <property type="protein sequence ID" value="BAB58383.1"/>
    <property type="molecule type" value="Genomic_DNA"/>
</dbReference>
<dbReference type="RefSeq" id="WP_000155386.1">
    <property type="nucleotide sequence ID" value="NC_002758.2"/>
</dbReference>
<dbReference type="SMR" id="Q99S48"/>
<dbReference type="KEGG" id="sav:SAV2221"/>
<dbReference type="HOGENOM" id="CLU_000604_1_22_9"/>
<dbReference type="PhylomeDB" id="Q99S48"/>
<dbReference type="Proteomes" id="UP000002481">
    <property type="component" value="Chromosome"/>
</dbReference>
<dbReference type="GO" id="GO:0043190">
    <property type="term" value="C:ATP-binding cassette (ABC) transporter complex"/>
    <property type="evidence" value="ECO:0007669"/>
    <property type="project" value="TreeGrafter"/>
</dbReference>
<dbReference type="GO" id="GO:0005524">
    <property type="term" value="F:ATP binding"/>
    <property type="evidence" value="ECO:0007669"/>
    <property type="project" value="UniProtKB-KW"/>
</dbReference>
<dbReference type="GO" id="GO:0016887">
    <property type="term" value="F:ATP hydrolysis activity"/>
    <property type="evidence" value="ECO:0007669"/>
    <property type="project" value="InterPro"/>
</dbReference>
<dbReference type="GO" id="GO:0042626">
    <property type="term" value="F:ATPase-coupled transmembrane transporter activity"/>
    <property type="evidence" value="ECO:0007669"/>
    <property type="project" value="TreeGrafter"/>
</dbReference>
<dbReference type="CDD" id="cd03225">
    <property type="entry name" value="ABC_cobalt_CbiO_domain1"/>
    <property type="match status" value="1"/>
</dbReference>
<dbReference type="FunFam" id="3.40.50.300:FF:000224">
    <property type="entry name" value="Energy-coupling factor transporter ATP-binding protein EcfA"/>
    <property type="match status" value="1"/>
</dbReference>
<dbReference type="Gene3D" id="3.40.50.300">
    <property type="entry name" value="P-loop containing nucleotide triphosphate hydrolases"/>
    <property type="match status" value="1"/>
</dbReference>
<dbReference type="InterPro" id="IPR003593">
    <property type="entry name" value="AAA+_ATPase"/>
</dbReference>
<dbReference type="InterPro" id="IPR003439">
    <property type="entry name" value="ABC_transporter-like_ATP-bd"/>
</dbReference>
<dbReference type="InterPro" id="IPR017871">
    <property type="entry name" value="ABC_transporter-like_CS"/>
</dbReference>
<dbReference type="InterPro" id="IPR015856">
    <property type="entry name" value="ABC_transpr_CbiO/EcfA_su"/>
</dbReference>
<dbReference type="InterPro" id="IPR050095">
    <property type="entry name" value="ECF_ABC_transporter_ATP-bd"/>
</dbReference>
<dbReference type="InterPro" id="IPR030946">
    <property type="entry name" value="EcfA2"/>
</dbReference>
<dbReference type="InterPro" id="IPR027417">
    <property type="entry name" value="P-loop_NTPase"/>
</dbReference>
<dbReference type="NCBIfam" id="TIGR04521">
    <property type="entry name" value="ECF_ATPase_2"/>
    <property type="match status" value="1"/>
</dbReference>
<dbReference type="NCBIfam" id="NF010166">
    <property type="entry name" value="PRK13646.1"/>
    <property type="match status" value="1"/>
</dbReference>
<dbReference type="PANTHER" id="PTHR43553:SF27">
    <property type="entry name" value="ENERGY-COUPLING FACTOR TRANSPORTER ATP-BINDING PROTEIN ECFA2"/>
    <property type="match status" value="1"/>
</dbReference>
<dbReference type="PANTHER" id="PTHR43553">
    <property type="entry name" value="HEAVY METAL TRANSPORTER"/>
    <property type="match status" value="1"/>
</dbReference>
<dbReference type="Pfam" id="PF00005">
    <property type="entry name" value="ABC_tran"/>
    <property type="match status" value="1"/>
</dbReference>
<dbReference type="SMART" id="SM00382">
    <property type="entry name" value="AAA"/>
    <property type="match status" value="1"/>
</dbReference>
<dbReference type="SUPFAM" id="SSF52540">
    <property type="entry name" value="P-loop containing nucleoside triphosphate hydrolases"/>
    <property type="match status" value="1"/>
</dbReference>
<dbReference type="PROSITE" id="PS00211">
    <property type="entry name" value="ABC_TRANSPORTER_1"/>
    <property type="match status" value="1"/>
</dbReference>
<dbReference type="PROSITE" id="PS50893">
    <property type="entry name" value="ABC_TRANSPORTER_2"/>
    <property type="match status" value="1"/>
</dbReference>
<dbReference type="PROSITE" id="PS51246">
    <property type="entry name" value="CBIO"/>
    <property type="match status" value="1"/>
</dbReference>
<reference key="1">
    <citation type="journal article" date="2001" name="Lancet">
        <title>Whole genome sequencing of meticillin-resistant Staphylococcus aureus.</title>
        <authorList>
            <person name="Kuroda M."/>
            <person name="Ohta T."/>
            <person name="Uchiyama I."/>
            <person name="Baba T."/>
            <person name="Yuzawa H."/>
            <person name="Kobayashi I."/>
            <person name="Cui L."/>
            <person name="Oguchi A."/>
            <person name="Aoki K."/>
            <person name="Nagai Y."/>
            <person name="Lian J.-Q."/>
            <person name="Ito T."/>
            <person name="Kanamori M."/>
            <person name="Matsumaru H."/>
            <person name="Maruyama A."/>
            <person name="Murakami H."/>
            <person name="Hosoyama A."/>
            <person name="Mizutani-Ui Y."/>
            <person name="Takahashi N.K."/>
            <person name="Sawano T."/>
            <person name="Inoue R."/>
            <person name="Kaito C."/>
            <person name="Sekimizu K."/>
            <person name="Hirakawa H."/>
            <person name="Kuhara S."/>
            <person name="Goto S."/>
            <person name="Yabuzaki J."/>
            <person name="Kanehisa M."/>
            <person name="Yamashita A."/>
            <person name="Oshima K."/>
            <person name="Furuya K."/>
            <person name="Yoshino C."/>
            <person name="Shiba T."/>
            <person name="Hattori M."/>
            <person name="Ogasawara N."/>
            <person name="Hayashi H."/>
            <person name="Hiramatsu K."/>
        </authorList>
    </citation>
    <scope>NUCLEOTIDE SEQUENCE [LARGE SCALE GENOMIC DNA]</scope>
    <source>
        <strain>Mu50 / ATCC 700699</strain>
    </source>
</reference>